<organismHost>
    <name type="scientific">Escherichia coli</name>
    <dbReference type="NCBI Taxonomy" id="562"/>
</organismHost>
<feature type="chain" id="PRO_0000164951" description="Probable mobile endonuclease C">
    <location>
        <begin position="1"/>
        <end position="210"/>
    </location>
</feature>
<feature type="domain" description="HNH">
    <location>
        <begin position="25"/>
        <end position="54"/>
    </location>
</feature>
<evidence type="ECO:0000305" key="1"/>
<accession>P07074</accession>
<comment type="similarity">
    <text evidence="1">To phage T4 mobB and mobD.</text>
</comment>
<keyword id="KW-0255">Endonuclease</keyword>
<keyword id="KW-0378">Hydrolase</keyword>
<keyword id="KW-0540">Nuclease</keyword>
<keyword id="KW-1185">Reference proteome</keyword>
<sequence>MNYDRIYSNLVNSAEHPSKPRQTKAGYELHHIIPRSMGGSDDLDNLVFLTYKAHYTAHHLLAKIYGGKMYDAYWIMSNSKHRKVTSSQYAYAKAKKFENQRGAKRSDKTKKLMSIARSKVTLPDDFGKRISDGLTGRTLSTNHKEHIKNSSRNRFNTKTVIGYSPDGNTIELTGATEIRNAGFFHSAVYKCCKGIQSIHKGYTWKYKDEL</sequence>
<reference key="1">
    <citation type="journal article" date="1987" name="Nucleic Acids Res.">
        <title>Nucleotide sequence and primary structures of gene products coded for by the T4 genome between map positions 48.266 kb and 39.166 kb.</title>
        <authorList>
            <person name="Tomaschewski J."/>
            <person name="Rueger W."/>
        </authorList>
    </citation>
    <scope>NUCLEOTIDE SEQUENCE [GENOMIC DNA]</scope>
    <source>
        <strain>C</strain>
    </source>
</reference>
<reference key="2">
    <citation type="journal article" date="2003" name="Microbiol. Mol. Biol. Rev.">
        <title>Bacteriophage T4 genome.</title>
        <authorList>
            <person name="Miller E.S."/>
            <person name="Kutter E."/>
            <person name="Mosig G."/>
            <person name="Arisaka F."/>
            <person name="Kunisawa T."/>
            <person name="Ruger W."/>
        </authorList>
    </citation>
    <scope>NUCLEOTIDE SEQUENCE [LARGE SCALE GENOMIC DNA]</scope>
</reference>
<name>MOBC_BPT4</name>
<gene>
    <name type="primary">mobC</name>
    <name type="synonym">55.10</name>
</gene>
<proteinExistence type="predicted"/>
<protein>
    <recommendedName>
        <fullName>Probable mobile endonuclease C</fullName>
    </recommendedName>
</protein>
<organism>
    <name type="scientific">Enterobacteria phage T4</name>
    <name type="common">Bacteriophage T4</name>
    <dbReference type="NCBI Taxonomy" id="10665"/>
    <lineage>
        <taxon>Viruses</taxon>
        <taxon>Duplodnaviria</taxon>
        <taxon>Heunggongvirae</taxon>
        <taxon>Uroviricota</taxon>
        <taxon>Caudoviricetes</taxon>
        <taxon>Straboviridae</taxon>
        <taxon>Tevenvirinae</taxon>
        <taxon>Tequatrovirus</taxon>
    </lineage>
</organism>
<dbReference type="EMBL" id="Y00122">
    <property type="protein sequence ID" value="CAA68311.1"/>
    <property type="molecule type" value="Genomic_DNA"/>
</dbReference>
<dbReference type="EMBL" id="AF158101">
    <property type="protein sequence ID" value="AAD42591.1"/>
    <property type="molecule type" value="Genomic_DNA"/>
</dbReference>
<dbReference type="PIR" id="F29284">
    <property type="entry name" value="Z7BPT9"/>
</dbReference>
<dbReference type="RefSeq" id="NP_049689.1">
    <property type="nucleotide sequence ID" value="NC_000866.4"/>
</dbReference>
<dbReference type="SMR" id="P07074"/>
<dbReference type="GeneID" id="1258570"/>
<dbReference type="KEGG" id="vg:1258570"/>
<dbReference type="OrthoDB" id="19703at10239"/>
<dbReference type="Proteomes" id="UP000009087">
    <property type="component" value="Segment"/>
</dbReference>
<dbReference type="GO" id="GO:0003677">
    <property type="term" value="F:DNA binding"/>
    <property type="evidence" value="ECO:0007669"/>
    <property type="project" value="InterPro"/>
</dbReference>
<dbReference type="GO" id="GO:0004519">
    <property type="term" value="F:endonuclease activity"/>
    <property type="evidence" value="ECO:0007669"/>
    <property type="project" value="UniProtKB-KW"/>
</dbReference>
<dbReference type="GO" id="GO:0008270">
    <property type="term" value="F:zinc ion binding"/>
    <property type="evidence" value="ECO:0007669"/>
    <property type="project" value="InterPro"/>
</dbReference>
<dbReference type="CDD" id="cd00085">
    <property type="entry name" value="HNHc"/>
    <property type="match status" value="1"/>
</dbReference>
<dbReference type="Gene3D" id="1.10.30.50">
    <property type="match status" value="1"/>
</dbReference>
<dbReference type="Gene3D" id="1.10.10.10">
    <property type="entry name" value="Winged helix-like DNA-binding domain superfamily/Winged helix DNA-binding domain"/>
    <property type="match status" value="1"/>
</dbReference>
<dbReference type="InterPro" id="IPR002711">
    <property type="entry name" value="HNH"/>
</dbReference>
<dbReference type="InterPro" id="IPR003615">
    <property type="entry name" value="HNH_nuc"/>
</dbReference>
<dbReference type="InterPro" id="IPR003647">
    <property type="entry name" value="Intron_nuc_1_rpt"/>
</dbReference>
<dbReference type="InterPro" id="IPR003611">
    <property type="entry name" value="NUMOD3"/>
</dbReference>
<dbReference type="InterPro" id="IPR036388">
    <property type="entry name" value="WH-like_DNA-bd_sf"/>
</dbReference>
<dbReference type="Pfam" id="PF01844">
    <property type="entry name" value="HNH"/>
    <property type="match status" value="1"/>
</dbReference>
<dbReference type="SMART" id="SM00507">
    <property type="entry name" value="HNHc"/>
    <property type="match status" value="1"/>
</dbReference>
<dbReference type="SMART" id="SM00497">
    <property type="entry name" value="IENR1"/>
    <property type="match status" value="1"/>
</dbReference>
<dbReference type="SMART" id="SM00496">
    <property type="entry name" value="IENR2"/>
    <property type="match status" value="2"/>
</dbReference>
<dbReference type="SUPFAM" id="SSF64496">
    <property type="entry name" value="DNA-binding domain of intron-encoded endonucleases"/>
    <property type="match status" value="1"/>
</dbReference>